<feature type="chain" id="PRO_0000386584" description="Sodium-dependent nutrient amino acid transporter 1">
    <location>
        <begin position="1"/>
        <end position="645"/>
    </location>
</feature>
<feature type="topological domain" description="Cytoplasmic" evidence="3">
    <location>
        <begin position="1"/>
        <end position="51"/>
    </location>
</feature>
<feature type="transmembrane region" description="Helical; Name=1" evidence="3">
    <location>
        <begin position="52"/>
        <end position="72"/>
    </location>
</feature>
<feature type="transmembrane region" description="Helical; Name=2" evidence="3">
    <location>
        <begin position="85"/>
        <end position="105"/>
    </location>
</feature>
<feature type="transmembrane region" description="Helical; Name=3" evidence="3">
    <location>
        <begin position="138"/>
        <end position="158"/>
    </location>
</feature>
<feature type="transmembrane region" description="Helical; Name=4" evidence="3">
    <location>
        <begin position="234"/>
        <end position="254"/>
    </location>
</feature>
<feature type="transmembrane region" description="Helical; Name=5" evidence="3">
    <location>
        <begin position="264"/>
        <end position="284"/>
    </location>
</feature>
<feature type="transmembrane region" description="Helical; Name=6" evidence="3">
    <location>
        <begin position="313"/>
        <end position="333"/>
    </location>
</feature>
<feature type="transmembrane region" description="Helical; Name=7" evidence="3">
    <location>
        <begin position="347"/>
        <end position="367"/>
    </location>
</feature>
<feature type="transmembrane region" description="Helical; Name=8" evidence="3">
    <location>
        <begin position="407"/>
        <end position="427"/>
    </location>
</feature>
<feature type="transmembrane region" description="Helical; Name=9" evidence="3">
    <location>
        <begin position="454"/>
        <end position="474"/>
    </location>
</feature>
<feature type="transmembrane region" description="Helical; Name=10" evidence="3">
    <location>
        <begin position="480"/>
        <end position="500"/>
    </location>
</feature>
<feature type="transmembrane region" description="Helical; Name=11" evidence="3">
    <location>
        <begin position="522"/>
        <end position="542"/>
    </location>
</feature>
<feature type="transmembrane region" description="Helical; Name=12" evidence="3">
    <location>
        <begin position="559"/>
        <end position="579"/>
    </location>
</feature>
<feature type="region of interest" description="Disordered" evidence="4">
    <location>
        <begin position="1"/>
        <end position="48"/>
    </location>
</feature>
<feature type="compositionally biased region" description="Low complexity" evidence="4">
    <location>
        <begin position="18"/>
        <end position="32"/>
    </location>
</feature>
<feature type="compositionally biased region" description="Basic and acidic residues" evidence="4">
    <location>
        <begin position="33"/>
        <end position="48"/>
    </location>
</feature>
<feature type="glycosylation site" description="N-linked (GlcNAc...) asparagine" evidence="3">
    <location>
        <position position="191"/>
    </location>
</feature>
<feature type="glycosylation site" description="N-linked (GlcNAc...) asparagine" evidence="3">
    <location>
        <position position="205"/>
    </location>
</feature>
<feature type="glycosylation site" description="N-linked (GlcNAc...) asparagine" evidence="3">
    <location>
        <position position="514"/>
    </location>
</feature>
<name>NAAT1_DROMO</name>
<gene>
    <name evidence="2" type="primary">NAAT1</name>
    <name type="ORF">GI11052</name>
</gene>
<protein>
    <recommendedName>
        <fullName evidence="2">Sodium-dependent nutrient amino acid transporter 1</fullName>
    </recommendedName>
</protein>
<accession>B4L7U0</accession>
<organism>
    <name type="scientific">Drosophila mojavensis</name>
    <name type="common">Fruit fly</name>
    <dbReference type="NCBI Taxonomy" id="7230"/>
    <lineage>
        <taxon>Eukaryota</taxon>
        <taxon>Metazoa</taxon>
        <taxon>Ecdysozoa</taxon>
        <taxon>Arthropoda</taxon>
        <taxon>Hexapoda</taxon>
        <taxon>Insecta</taxon>
        <taxon>Pterygota</taxon>
        <taxon>Neoptera</taxon>
        <taxon>Endopterygota</taxon>
        <taxon>Diptera</taxon>
        <taxon>Brachycera</taxon>
        <taxon>Muscomorpha</taxon>
        <taxon>Ephydroidea</taxon>
        <taxon>Drosophilidae</taxon>
        <taxon>Drosophila</taxon>
    </lineage>
</organism>
<proteinExistence type="inferred from homology"/>
<dbReference type="EMBL" id="CH933814">
    <property type="protein sequence ID" value="EDW05515.1"/>
    <property type="status" value="ALT_INIT"/>
    <property type="molecule type" value="Genomic_DNA"/>
</dbReference>
<dbReference type="SMR" id="B4L7U0"/>
<dbReference type="FunCoup" id="B4L7U0">
    <property type="interactions" value="44"/>
</dbReference>
<dbReference type="GlyCosmos" id="B4L7U0">
    <property type="glycosylation" value="3 sites, No reported glycans"/>
</dbReference>
<dbReference type="EnsemblMetazoa" id="FBtr0161777">
    <property type="protein sequence ID" value="FBpp0160269"/>
    <property type="gene ID" value="FBgn0133815"/>
</dbReference>
<dbReference type="EnsemblMetazoa" id="XM_002011489.4">
    <property type="protein sequence ID" value="XP_002011525.2"/>
    <property type="gene ID" value="LOC6585901"/>
</dbReference>
<dbReference type="GeneID" id="6585901"/>
<dbReference type="KEGG" id="dmo:Dmoj_GI11052"/>
<dbReference type="CTD" id="31457"/>
<dbReference type="eggNOG" id="KOG3660">
    <property type="taxonomic scope" value="Eukaryota"/>
</dbReference>
<dbReference type="InParanoid" id="B4L7U0"/>
<dbReference type="OrthoDB" id="6581954at2759"/>
<dbReference type="Proteomes" id="UP000009192">
    <property type="component" value="Unassembled WGS sequence"/>
</dbReference>
<dbReference type="GO" id="GO:0005886">
    <property type="term" value="C:plasma membrane"/>
    <property type="evidence" value="ECO:0000305"/>
    <property type="project" value="UniProtKB"/>
</dbReference>
<dbReference type="GO" id="GO:0005283">
    <property type="term" value="F:amino acid:sodium symporter activity"/>
    <property type="evidence" value="ECO:0000250"/>
    <property type="project" value="UniProtKB"/>
</dbReference>
<dbReference type="GO" id="GO:0042943">
    <property type="term" value="F:D-amino acid transmembrane transporter activity"/>
    <property type="evidence" value="ECO:0000250"/>
    <property type="project" value="UniProtKB"/>
</dbReference>
<dbReference type="GO" id="GO:0015179">
    <property type="term" value="F:L-amino acid transmembrane transporter activity"/>
    <property type="evidence" value="ECO:0007669"/>
    <property type="project" value="EnsemblMetazoa"/>
</dbReference>
<dbReference type="GO" id="GO:0015175">
    <property type="term" value="F:neutral L-amino acid transmembrane transporter activity"/>
    <property type="evidence" value="ECO:0000250"/>
    <property type="project" value="UniProtKB"/>
</dbReference>
<dbReference type="GO" id="GO:0089718">
    <property type="term" value="P:amino acid import across plasma membrane"/>
    <property type="evidence" value="ECO:0007669"/>
    <property type="project" value="TreeGrafter"/>
</dbReference>
<dbReference type="GO" id="GO:0042940">
    <property type="term" value="P:D-amino acid transport"/>
    <property type="evidence" value="ECO:0000250"/>
    <property type="project" value="UniProtKB"/>
</dbReference>
<dbReference type="GO" id="GO:0015804">
    <property type="term" value="P:neutral amino acid transport"/>
    <property type="evidence" value="ECO:0000250"/>
    <property type="project" value="UniProtKB"/>
</dbReference>
<dbReference type="GO" id="GO:0006814">
    <property type="term" value="P:sodium ion transport"/>
    <property type="evidence" value="ECO:0000250"/>
    <property type="project" value="UniProtKB"/>
</dbReference>
<dbReference type="CDD" id="cd10324">
    <property type="entry name" value="SLC6sbd"/>
    <property type="match status" value="1"/>
</dbReference>
<dbReference type="InterPro" id="IPR000175">
    <property type="entry name" value="Na/ntran_symport"/>
</dbReference>
<dbReference type="InterPro" id="IPR037272">
    <property type="entry name" value="SNS_sf"/>
</dbReference>
<dbReference type="PANTHER" id="PTHR11616:SF321">
    <property type="entry name" value="SODIUM-DEPENDENT NUTRIENT AMINO ACID TRANSPORTER 1-RELATED"/>
    <property type="match status" value="1"/>
</dbReference>
<dbReference type="PANTHER" id="PTHR11616">
    <property type="entry name" value="SODIUM/CHLORIDE DEPENDENT TRANSPORTER"/>
    <property type="match status" value="1"/>
</dbReference>
<dbReference type="Pfam" id="PF00209">
    <property type="entry name" value="SNF"/>
    <property type="match status" value="1"/>
</dbReference>
<dbReference type="PRINTS" id="PR00176">
    <property type="entry name" value="NANEUSMPORT"/>
</dbReference>
<dbReference type="SUPFAM" id="SSF161070">
    <property type="entry name" value="SNF-like"/>
    <property type="match status" value="1"/>
</dbReference>
<dbReference type="PROSITE" id="PS00610">
    <property type="entry name" value="NA_NEUROTRAN_SYMP_1"/>
    <property type="match status" value="1"/>
</dbReference>
<dbReference type="PROSITE" id="PS00754">
    <property type="entry name" value="NA_NEUROTRAN_SYMP_2"/>
    <property type="match status" value="1"/>
</dbReference>
<dbReference type="PROSITE" id="PS50267">
    <property type="entry name" value="NA_NEUROTRAN_SYMP_3"/>
    <property type="match status" value="1"/>
</dbReference>
<sequence>MELKTMPHNGANGSPQHNNNNNSNNNNNVSSDTKTDNNEKEAQKKDEGRTNWSNGIEFLMSCISVSVGLGNVWRFPFTAYENGGGAFLIPYIIVLFLIGKPMYYLEMIIGQFTSQGTVKIWSICPSFVGVGYGQAFATICIITYYSSLLALTLYYLFVSFQSELPWSYCRDEWTNCVNSIPTEFVETALGNTTSALAQQANTLSNTTKLQSSSELYFLNVVIKEKSDISDGIGIPDWKLTIALFVSWVVIFLVIMRGVKSSGKAAYFLALFPYVVLFALLGRAVTLEGAVDGIIFFLQPQWGELLNPIVWKEAVVQCFFSLAVGCGPIIMFASYNRFDHGIYRDAMIVTTLDTLTSLLGGITIFAILGNLAHNLKAENIRDVVRSGTGLAFISYPDAISKFQAVPQLFSVLFFFMLFVLGIGSIVALQSTIVTIICDQFKSWKYWKVALATSACGFLMGLVYVTPGGQWILTLVDFYGGTYVVFILAIFELSGIVWIYGLQNFCDDIEFMSNKNVSMYWRLCWSFFTPVMMIVIFIYSMATIQPIKYSDQYFPLAGDVAGWLLFAVGAAQFPLWGWWYIATHRHGSCAESIKASLKPSSKWGPASPENRQAWLLFKSDLAAKRANEAKSNKFGFFQQKLRNMCGK</sequence>
<evidence type="ECO:0000250" key="1"/>
<evidence type="ECO:0000250" key="2">
    <source>
        <dbReference type="UniProtKB" id="Q9W4C5"/>
    </source>
</evidence>
<evidence type="ECO:0000255" key="3"/>
<evidence type="ECO:0000256" key="4">
    <source>
        <dbReference type="SAM" id="MobiDB-lite"/>
    </source>
</evidence>
<evidence type="ECO:0000305" key="5"/>
<evidence type="ECO:0000312" key="6">
    <source>
        <dbReference type="EMBL" id="EDW05515.1"/>
    </source>
</evidence>
<reference evidence="6" key="1">
    <citation type="journal article" date="2007" name="Nature">
        <title>Evolution of genes and genomes on the Drosophila phylogeny.</title>
        <authorList>
            <consortium name="Drosophila 12 genomes consortium"/>
        </authorList>
    </citation>
    <scope>NUCLEOTIDE SEQUENCE [LARGE SCALE GENOMIC DNA]</scope>
    <source>
        <strain evidence="6">Tucson 15081-1352.22</strain>
    </source>
</reference>
<keyword id="KW-0029">Amino-acid transport</keyword>
<keyword id="KW-0325">Glycoprotein</keyword>
<keyword id="KW-0406">Ion transport</keyword>
<keyword id="KW-0472">Membrane</keyword>
<keyword id="KW-1185">Reference proteome</keyword>
<keyword id="KW-0915">Sodium</keyword>
<keyword id="KW-0739">Sodium transport</keyword>
<keyword id="KW-0769">Symport</keyword>
<keyword id="KW-0812">Transmembrane</keyword>
<keyword id="KW-1133">Transmembrane helix</keyword>
<keyword id="KW-0813">Transport</keyword>
<comment type="function">
    <text evidence="1">Unusual broad substrate spectrum amino acid:sodium cotransporter that promotes absorption of the D isomers of essential amino acids. Neutral amino acids are the preferred substrates, especially methionine and phenylalanine (By similarity).</text>
</comment>
<comment type="subcellular location">
    <subcellularLocation>
        <location evidence="5">Membrane</location>
        <topology evidence="5">Multi-pass membrane protein</topology>
    </subcellularLocation>
</comment>
<comment type="similarity">
    <text evidence="5">Belongs to the sodium:neurotransmitter symporter (SNF) (TC 2.A.22) family.</text>
</comment>
<comment type="sequence caution" evidence="5">
    <conflict type="erroneous initiation">
        <sequence resource="EMBL-CDS" id="EDW05515"/>
    </conflict>
</comment>